<protein>
    <recommendedName>
        <fullName evidence="1">Dephospho-CoA kinase</fullName>
        <ecNumber evidence="1">2.7.1.24</ecNumber>
    </recommendedName>
    <alternativeName>
        <fullName evidence="1">Dephosphocoenzyme A kinase</fullName>
    </alternativeName>
</protein>
<gene>
    <name evidence="1" type="primary">coaE</name>
    <name type="ordered locus">NMB0331</name>
</gene>
<feature type="chain" id="PRO_0000172968" description="Dephospho-CoA kinase">
    <location>
        <begin position="1"/>
        <end position="210"/>
    </location>
</feature>
<feature type="domain" description="DPCK" evidence="1">
    <location>
        <begin position="4"/>
        <end position="202"/>
    </location>
</feature>
<feature type="binding site" evidence="1">
    <location>
        <begin position="12"/>
        <end position="17"/>
    </location>
    <ligand>
        <name>ATP</name>
        <dbReference type="ChEBI" id="CHEBI:30616"/>
    </ligand>
</feature>
<evidence type="ECO:0000255" key="1">
    <source>
        <dbReference type="HAMAP-Rule" id="MF_00376"/>
    </source>
</evidence>
<sequence length="210" mass="22904">MTVWVGLTGGIGSGKSAAAQCFADLGVPRIDADAAAHSLTASDGIALPEIRRLFGDTVFDTQGLLRRDILRKEVFASPSRKALLESVMLPLIFSEIKKQQETFTDAAYGIVEIPLLTEKRQFISLIRRVLTISAPVEKRIGRVMARSGLTRGEVAAVISHQASESERLLLADDVLLNDGSLKSLREKTMRLHAFYSGIFASKPTQGKHND</sequence>
<keyword id="KW-0067">ATP-binding</keyword>
<keyword id="KW-0173">Coenzyme A biosynthesis</keyword>
<keyword id="KW-0963">Cytoplasm</keyword>
<keyword id="KW-0418">Kinase</keyword>
<keyword id="KW-0547">Nucleotide-binding</keyword>
<keyword id="KW-1185">Reference proteome</keyword>
<keyword id="KW-0808">Transferase</keyword>
<organism>
    <name type="scientific">Neisseria meningitidis serogroup B (strain ATCC BAA-335 / MC58)</name>
    <dbReference type="NCBI Taxonomy" id="122586"/>
    <lineage>
        <taxon>Bacteria</taxon>
        <taxon>Pseudomonadati</taxon>
        <taxon>Pseudomonadota</taxon>
        <taxon>Betaproteobacteria</taxon>
        <taxon>Neisseriales</taxon>
        <taxon>Neisseriaceae</taxon>
        <taxon>Neisseria</taxon>
    </lineage>
</organism>
<name>COAE_NEIMB</name>
<comment type="function">
    <text evidence="1">Catalyzes the phosphorylation of the 3'-hydroxyl group of dephosphocoenzyme A to form coenzyme A.</text>
</comment>
<comment type="catalytic activity">
    <reaction evidence="1">
        <text>3'-dephospho-CoA + ATP = ADP + CoA + H(+)</text>
        <dbReference type="Rhea" id="RHEA:18245"/>
        <dbReference type="ChEBI" id="CHEBI:15378"/>
        <dbReference type="ChEBI" id="CHEBI:30616"/>
        <dbReference type="ChEBI" id="CHEBI:57287"/>
        <dbReference type="ChEBI" id="CHEBI:57328"/>
        <dbReference type="ChEBI" id="CHEBI:456216"/>
        <dbReference type="EC" id="2.7.1.24"/>
    </reaction>
</comment>
<comment type="pathway">
    <text evidence="1">Cofactor biosynthesis; coenzyme A biosynthesis; CoA from (R)-pantothenate: step 5/5.</text>
</comment>
<comment type="subcellular location">
    <subcellularLocation>
        <location evidence="1">Cytoplasm</location>
    </subcellularLocation>
</comment>
<comment type="similarity">
    <text evidence="1">Belongs to the CoaE family.</text>
</comment>
<accession>Q4W580</accession>
<dbReference type="EC" id="2.7.1.24" evidence="1"/>
<dbReference type="EMBL" id="AE002098">
    <property type="protein sequence ID" value="AAY52165.1"/>
    <property type="molecule type" value="Genomic_DNA"/>
</dbReference>
<dbReference type="RefSeq" id="NP_273380.1">
    <property type="nucleotide sequence ID" value="NC_003112.2"/>
</dbReference>
<dbReference type="RefSeq" id="WP_002224873.1">
    <property type="nucleotide sequence ID" value="NC_003112.2"/>
</dbReference>
<dbReference type="SMR" id="Q4W580"/>
<dbReference type="FunCoup" id="Q4W580">
    <property type="interactions" value="384"/>
</dbReference>
<dbReference type="STRING" id="122586.NMB0331"/>
<dbReference type="PaxDb" id="122586-NMB0331"/>
<dbReference type="KEGG" id="nme:NMB0331"/>
<dbReference type="PATRIC" id="fig|122586.8.peg.419"/>
<dbReference type="HOGENOM" id="CLU_057180_1_2_4"/>
<dbReference type="InParanoid" id="Q4W580"/>
<dbReference type="OrthoDB" id="9812943at2"/>
<dbReference type="UniPathway" id="UPA00241">
    <property type="reaction ID" value="UER00356"/>
</dbReference>
<dbReference type="Proteomes" id="UP000000425">
    <property type="component" value="Chromosome"/>
</dbReference>
<dbReference type="GO" id="GO:0005737">
    <property type="term" value="C:cytoplasm"/>
    <property type="evidence" value="ECO:0007669"/>
    <property type="project" value="UniProtKB-SubCell"/>
</dbReference>
<dbReference type="GO" id="GO:0005524">
    <property type="term" value="F:ATP binding"/>
    <property type="evidence" value="ECO:0007669"/>
    <property type="project" value="UniProtKB-UniRule"/>
</dbReference>
<dbReference type="GO" id="GO:0004140">
    <property type="term" value="F:dephospho-CoA kinase activity"/>
    <property type="evidence" value="ECO:0000318"/>
    <property type="project" value="GO_Central"/>
</dbReference>
<dbReference type="GO" id="GO:0015937">
    <property type="term" value="P:coenzyme A biosynthetic process"/>
    <property type="evidence" value="ECO:0000318"/>
    <property type="project" value="GO_Central"/>
</dbReference>
<dbReference type="CDD" id="cd02022">
    <property type="entry name" value="DPCK"/>
    <property type="match status" value="1"/>
</dbReference>
<dbReference type="FunFam" id="3.40.50.300:FF:002756">
    <property type="entry name" value="Dephospho-CoA kinase"/>
    <property type="match status" value="1"/>
</dbReference>
<dbReference type="Gene3D" id="3.40.50.300">
    <property type="entry name" value="P-loop containing nucleotide triphosphate hydrolases"/>
    <property type="match status" value="1"/>
</dbReference>
<dbReference type="HAMAP" id="MF_00376">
    <property type="entry name" value="Dephospho_CoA_kinase"/>
    <property type="match status" value="1"/>
</dbReference>
<dbReference type="InterPro" id="IPR001977">
    <property type="entry name" value="Depp_CoAkinase"/>
</dbReference>
<dbReference type="InterPro" id="IPR027417">
    <property type="entry name" value="P-loop_NTPase"/>
</dbReference>
<dbReference type="NCBIfam" id="TIGR00152">
    <property type="entry name" value="dephospho-CoA kinase"/>
    <property type="match status" value="1"/>
</dbReference>
<dbReference type="PANTHER" id="PTHR10695:SF46">
    <property type="entry name" value="BIFUNCTIONAL COENZYME A SYNTHASE-RELATED"/>
    <property type="match status" value="1"/>
</dbReference>
<dbReference type="PANTHER" id="PTHR10695">
    <property type="entry name" value="DEPHOSPHO-COA KINASE-RELATED"/>
    <property type="match status" value="1"/>
</dbReference>
<dbReference type="Pfam" id="PF01121">
    <property type="entry name" value="CoaE"/>
    <property type="match status" value="1"/>
</dbReference>
<dbReference type="SUPFAM" id="SSF52540">
    <property type="entry name" value="P-loop containing nucleoside triphosphate hydrolases"/>
    <property type="match status" value="1"/>
</dbReference>
<dbReference type="PROSITE" id="PS51219">
    <property type="entry name" value="DPCK"/>
    <property type="match status" value="1"/>
</dbReference>
<proteinExistence type="inferred from homology"/>
<reference key="1">
    <citation type="journal article" date="2000" name="Science">
        <title>Complete genome sequence of Neisseria meningitidis serogroup B strain MC58.</title>
        <authorList>
            <person name="Tettelin H."/>
            <person name="Saunders N.J."/>
            <person name="Heidelberg J.F."/>
            <person name="Jeffries A.C."/>
            <person name="Nelson K.E."/>
            <person name="Eisen J.A."/>
            <person name="Ketchum K.A."/>
            <person name="Hood D.W."/>
            <person name="Peden J.F."/>
            <person name="Dodson R.J."/>
            <person name="Nelson W.C."/>
            <person name="Gwinn M.L."/>
            <person name="DeBoy R.T."/>
            <person name="Peterson J.D."/>
            <person name="Hickey E.K."/>
            <person name="Haft D.H."/>
            <person name="Salzberg S.L."/>
            <person name="White O."/>
            <person name="Fleischmann R.D."/>
            <person name="Dougherty B.A."/>
            <person name="Mason T.M."/>
            <person name="Ciecko A."/>
            <person name="Parksey D.S."/>
            <person name="Blair E."/>
            <person name="Cittone H."/>
            <person name="Clark E.B."/>
            <person name="Cotton M.D."/>
            <person name="Utterback T.R."/>
            <person name="Khouri H.M."/>
            <person name="Qin H."/>
            <person name="Vamathevan J.J."/>
            <person name="Gill J."/>
            <person name="Scarlato V."/>
            <person name="Masignani V."/>
            <person name="Pizza M."/>
            <person name="Grandi G."/>
            <person name="Sun L."/>
            <person name="Smith H.O."/>
            <person name="Fraser C.M."/>
            <person name="Moxon E.R."/>
            <person name="Rappuoli R."/>
            <person name="Venter J.C."/>
        </authorList>
    </citation>
    <scope>NUCLEOTIDE SEQUENCE [LARGE SCALE GENOMIC DNA]</scope>
    <source>
        <strain>ATCC BAA-335 / MC58</strain>
    </source>
</reference>